<dbReference type="EC" id="5.6.1.7" evidence="1"/>
<dbReference type="EMBL" id="U68778">
    <property type="protein sequence ID" value="AAB42013.1"/>
    <property type="molecule type" value="Genomic_DNA"/>
</dbReference>
<dbReference type="GO" id="GO:0005737">
    <property type="term" value="C:cytoplasm"/>
    <property type="evidence" value="ECO:0007669"/>
    <property type="project" value="UniProtKB-SubCell"/>
</dbReference>
<dbReference type="GO" id="GO:0005524">
    <property type="term" value="F:ATP binding"/>
    <property type="evidence" value="ECO:0007669"/>
    <property type="project" value="UniProtKB-UniRule"/>
</dbReference>
<dbReference type="GO" id="GO:0140662">
    <property type="term" value="F:ATP-dependent protein folding chaperone"/>
    <property type="evidence" value="ECO:0007669"/>
    <property type="project" value="InterPro"/>
</dbReference>
<dbReference type="GO" id="GO:0016853">
    <property type="term" value="F:isomerase activity"/>
    <property type="evidence" value="ECO:0007669"/>
    <property type="project" value="UniProtKB-KW"/>
</dbReference>
<dbReference type="GO" id="GO:0051082">
    <property type="term" value="F:unfolded protein binding"/>
    <property type="evidence" value="ECO:0007669"/>
    <property type="project" value="UniProtKB-UniRule"/>
</dbReference>
<dbReference type="GO" id="GO:0042026">
    <property type="term" value="P:protein refolding"/>
    <property type="evidence" value="ECO:0007669"/>
    <property type="project" value="UniProtKB-UniRule"/>
</dbReference>
<dbReference type="CDD" id="cd03344">
    <property type="entry name" value="GroEL"/>
    <property type="match status" value="1"/>
</dbReference>
<dbReference type="FunFam" id="1.10.560.10:FF:000001">
    <property type="entry name" value="60 kDa chaperonin"/>
    <property type="match status" value="1"/>
</dbReference>
<dbReference type="FunFam" id="3.50.7.10:FF:000001">
    <property type="entry name" value="60 kDa chaperonin"/>
    <property type="match status" value="1"/>
</dbReference>
<dbReference type="Gene3D" id="3.50.7.10">
    <property type="entry name" value="GroEL"/>
    <property type="match status" value="1"/>
</dbReference>
<dbReference type="Gene3D" id="1.10.560.10">
    <property type="entry name" value="GroEL-like equatorial domain"/>
    <property type="match status" value="1"/>
</dbReference>
<dbReference type="Gene3D" id="3.30.260.10">
    <property type="entry name" value="TCP-1-like chaperonin intermediate domain"/>
    <property type="match status" value="1"/>
</dbReference>
<dbReference type="HAMAP" id="MF_00600">
    <property type="entry name" value="CH60"/>
    <property type="match status" value="1"/>
</dbReference>
<dbReference type="InterPro" id="IPR018370">
    <property type="entry name" value="Chaperonin_Cpn60_CS"/>
</dbReference>
<dbReference type="InterPro" id="IPR001844">
    <property type="entry name" value="Cpn60/GroEL"/>
</dbReference>
<dbReference type="InterPro" id="IPR002423">
    <property type="entry name" value="Cpn60/GroEL/TCP-1"/>
</dbReference>
<dbReference type="InterPro" id="IPR027409">
    <property type="entry name" value="GroEL-like_apical_dom_sf"/>
</dbReference>
<dbReference type="InterPro" id="IPR027413">
    <property type="entry name" value="GROEL-like_equatorial_sf"/>
</dbReference>
<dbReference type="InterPro" id="IPR027410">
    <property type="entry name" value="TCP-1-like_intermed_sf"/>
</dbReference>
<dbReference type="NCBIfam" id="TIGR02348">
    <property type="entry name" value="GroEL"/>
    <property type="match status" value="1"/>
</dbReference>
<dbReference type="NCBIfam" id="NF000592">
    <property type="entry name" value="PRK00013.1"/>
    <property type="match status" value="1"/>
</dbReference>
<dbReference type="NCBIfam" id="NF009487">
    <property type="entry name" value="PRK12849.1"/>
    <property type="match status" value="1"/>
</dbReference>
<dbReference type="NCBIfam" id="NF009488">
    <property type="entry name" value="PRK12850.1"/>
    <property type="match status" value="1"/>
</dbReference>
<dbReference type="NCBIfam" id="NF009489">
    <property type="entry name" value="PRK12851.1"/>
    <property type="match status" value="1"/>
</dbReference>
<dbReference type="PANTHER" id="PTHR45633">
    <property type="entry name" value="60 KDA HEAT SHOCK PROTEIN, MITOCHONDRIAL"/>
    <property type="match status" value="1"/>
</dbReference>
<dbReference type="Pfam" id="PF00118">
    <property type="entry name" value="Cpn60_TCP1"/>
    <property type="match status" value="1"/>
</dbReference>
<dbReference type="PRINTS" id="PR00298">
    <property type="entry name" value="CHAPERONIN60"/>
</dbReference>
<dbReference type="SUPFAM" id="SSF52029">
    <property type="entry name" value="GroEL apical domain-like"/>
    <property type="match status" value="1"/>
</dbReference>
<dbReference type="SUPFAM" id="SSF48592">
    <property type="entry name" value="GroEL equatorial domain-like"/>
    <property type="match status" value="1"/>
</dbReference>
<dbReference type="SUPFAM" id="SSF54849">
    <property type="entry name" value="GroEL-intermediate domain like"/>
    <property type="match status" value="1"/>
</dbReference>
<dbReference type="PROSITE" id="PS00296">
    <property type="entry name" value="CHAPERONINS_CPN60"/>
    <property type="match status" value="1"/>
</dbReference>
<proteinExistence type="inferred from homology"/>
<gene>
    <name evidence="1" type="primary">groEL</name>
    <name evidence="1" type="synonym">groL</name>
    <name type="synonym">mopA</name>
</gene>
<organism>
    <name type="scientific">Stenotrophomonas maltophilia</name>
    <name type="common">Pseudomonas maltophilia</name>
    <name type="synonym">Xanthomonas maltophilia</name>
    <dbReference type="NCBI Taxonomy" id="40324"/>
    <lineage>
        <taxon>Bacteria</taxon>
        <taxon>Pseudomonadati</taxon>
        <taxon>Pseudomonadota</taxon>
        <taxon>Gammaproteobacteria</taxon>
        <taxon>Lysobacterales</taxon>
        <taxon>Lysobacteraceae</taxon>
        <taxon>Stenotrophomonas</taxon>
        <taxon>Stenotrophomonas maltophilia group</taxon>
    </lineage>
</organism>
<feature type="chain" id="PRO_0000063608" description="Chaperonin GroEL">
    <location>
        <begin position="1"/>
        <end position="548"/>
    </location>
</feature>
<feature type="binding site" evidence="1">
    <location>
        <begin position="30"/>
        <end position="33"/>
    </location>
    <ligand>
        <name>ATP</name>
        <dbReference type="ChEBI" id="CHEBI:30616"/>
    </ligand>
</feature>
<feature type="binding site" evidence="1">
    <location>
        <position position="51"/>
    </location>
    <ligand>
        <name>ATP</name>
        <dbReference type="ChEBI" id="CHEBI:30616"/>
    </ligand>
</feature>
<feature type="binding site" evidence="1">
    <location>
        <begin position="87"/>
        <end position="91"/>
    </location>
    <ligand>
        <name>ATP</name>
        <dbReference type="ChEBI" id="CHEBI:30616"/>
    </ligand>
</feature>
<feature type="binding site" evidence="1">
    <location>
        <position position="415"/>
    </location>
    <ligand>
        <name>ATP</name>
        <dbReference type="ChEBI" id="CHEBI:30616"/>
    </ligand>
</feature>
<feature type="binding site" evidence="1">
    <location>
        <begin position="479"/>
        <end position="481"/>
    </location>
    <ligand>
        <name>ATP</name>
        <dbReference type="ChEBI" id="CHEBI:30616"/>
    </ligand>
</feature>
<sequence>MAAKDVKFGNDARVKMLRGVNVLADAVKVTLGPKGRNVVLDKSFGAPTITKDGVSVAREIELEDKFENMGAQMVKEVASKANDAAGDGTTTATVLAQAIILKVMKAVAAGMNPMDLKRGIDKAVTVAVEELKALSVPCSDSKAIAQVGTISANSDETVGKLIAEAMDKVGKEGVITVEDGTGLQDELDVVEGMQFDRGYLSPYFINKPETGAVELESPFILLADKKISNIREMLPVLEAVAKAGKPLLIIAEDVEGEALATLVVNTMRGIVKVAAVKAPGFGDRRKAMLQDIATLTGGTVISEEIGMELEKATLEDLGQAKRVVINKDTTTIIDGVGEEAAIQGRVAQIRQQIEEATSDYDREKLQERVAKLAGGVAVIKVGAATEVEMKEKKARVEDALHATRAAVEEGVVAGGGVALIRVASKLADLRGQNEDQNVGIKVALRAMEAPLRQIVLNCGEEPSVVANTVKGGDGNYGYNAVXRRIRQHDRHGYPGSNQITRSALQYAASVAGLMITTECMVTDLPKNDAADLGAAGGMGGMGGMGGMM</sequence>
<reference key="1">
    <citation type="submission" date="1997-02" db="EMBL/GenBank/DDBJ databases">
        <title>Cloning and sequence analysis of the GroESL genes in Stenotrophomonas maltophilia.</title>
        <authorList>
            <person name="Serafica M.D.E."/>
            <person name="Yuriev O."/>
            <person name="Britz M.L."/>
        </authorList>
    </citation>
    <scope>NUCLEOTIDE SEQUENCE [GENOMIC DNA]</scope>
</reference>
<protein>
    <recommendedName>
        <fullName evidence="1">Chaperonin GroEL</fullName>
        <ecNumber evidence="1">5.6.1.7</ecNumber>
    </recommendedName>
    <alternativeName>
        <fullName evidence="1">60 kDa chaperonin</fullName>
    </alternativeName>
    <alternativeName>
        <fullName evidence="1">Chaperonin-60</fullName>
        <shortName evidence="1">Cpn60</shortName>
    </alternativeName>
</protein>
<accession>P95800</accession>
<evidence type="ECO:0000255" key="1">
    <source>
        <dbReference type="HAMAP-Rule" id="MF_00600"/>
    </source>
</evidence>
<name>CH60_STEMA</name>
<keyword id="KW-0067">ATP-binding</keyword>
<keyword id="KW-0143">Chaperone</keyword>
<keyword id="KW-0963">Cytoplasm</keyword>
<keyword id="KW-0413">Isomerase</keyword>
<keyword id="KW-0547">Nucleotide-binding</keyword>
<comment type="function">
    <text evidence="1">Together with its co-chaperonin GroES, plays an essential role in assisting protein folding. The GroEL-GroES system forms a nano-cage that allows encapsulation of the non-native substrate proteins and provides a physical environment optimized to promote and accelerate protein folding.</text>
</comment>
<comment type="catalytic activity">
    <reaction evidence="1">
        <text>ATP + H2O + a folded polypeptide = ADP + phosphate + an unfolded polypeptide.</text>
        <dbReference type="EC" id="5.6.1.7"/>
    </reaction>
</comment>
<comment type="subunit">
    <text evidence="1">Forms a cylinder of 14 subunits composed of two heptameric rings stacked back-to-back. Interacts with the co-chaperonin GroES.</text>
</comment>
<comment type="subcellular location">
    <subcellularLocation>
        <location evidence="1">Cytoplasm</location>
    </subcellularLocation>
</comment>
<comment type="similarity">
    <text evidence="1">Belongs to the chaperonin (HSP60) family.</text>
</comment>